<sequence length="295" mass="32153">MQSTAPHRPPQPSRLALYLDLIRWSRPAGWLLLLWPTLSALWIAAGGFPGWHLLAVFTLGTILMRSAGCCVNDVADRDFDRHVKRTAQRPVTSGAVSVREALGVGAVLALVSFGLVLTTNAATIAWSLPALAVTIAYPFAKRFVSMPQAVLGVAFSMGIPMAFTAVGGAVPMLAAWLVLGNLCWVLAYDTEYAMVDRDDDLKIGMKTSAITLGRHDVPAVMAFYLAFVALWAWALAPFGLGWPLHAVLAAMLLQVAWHWRLIRHRTREGCFRAFTGNHWLGFTLFAGIVAGFALR</sequence>
<reference key="1">
    <citation type="submission" date="2006-12" db="EMBL/GenBank/DDBJ databases">
        <title>Complete sequence of Acidovorax avenae subsp. citrulli AAC00-1.</title>
        <authorList>
            <person name="Copeland A."/>
            <person name="Lucas S."/>
            <person name="Lapidus A."/>
            <person name="Barry K."/>
            <person name="Detter J.C."/>
            <person name="Glavina del Rio T."/>
            <person name="Dalin E."/>
            <person name="Tice H."/>
            <person name="Pitluck S."/>
            <person name="Kiss H."/>
            <person name="Brettin T."/>
            <person name="Bruce D."/>
            <person name="Han C."/>
            <person name="Tapia R."/>
            <person name="Gilna P."/>
            <person name="Schmutz J."/>
            <person name="Larimer F."/>
            <person name="Land M."/>
            <person name="Hauser L."/>
            <person name="Kyrpides N."/>
            <person name="Kim E."/>
            <person name="Stahl D."/>
            <person name="Richardson P."/>
        </authorList>
    </citation>
    <scope>NUCLEOTIDE SEQUENCE [LARGE SCALE GENOMIC DNA]</scope>
    <source>
        <strain>AAC00-1</strain>
    </source>
</reference>
<feature type="chain" id="PRO_1000088169" description="4-hydroxybenzoate octaprenyltransferase">
    <location>
        <begin position="1"/>
        <end position="295"/>
    </location>
</feature>
<feature type="transmembrane region" description="Helical" evidence="1">
    <location>
        <begin position="28"/>
        <end position="48"/>
    </location>
</feature>
<feature type="transmembrane region" description="Helical" evidence="1">
    <location>
        <begin position="51"/>
        <end position="71"/>
    </location>
</feature>
<feature type="transmembrane region" description="Helical" evidence="1">
    <location>
        <begin position="101"/>
        <end position="121"/>
    </location>
</feature>
<feature type="transmembrane region" description="Helical" evidence="1">
    <location>
        <begin position="124"/>
        <end position="144"/>
    </location>
</feature>
<feature type="transmembrane region" description="Helical" evidence="1">
    <location>
        <begin position="159"/>
        <end position="179"/>
    </location>
</feature>
<feature type="transmembrane region" description="Helical" evidence="1">
    <location>
        <begin position="220"/>
        <end position="240"/>
    </location>
</feature>
<feature type="transmembrane region" description="Helical" evidence="1">
    <location>
        <begin position="242"/>
        <end position="262"/>
    </location>
</feature>
<feature type="transmembrane region" description="Helical" evidence="1">
    <location>
        <begin position="274"/>
        <end position="294"/>
    </location>
</feature>
<protein>
    <recommendedName>
        <fullName evidence="1">4-hydroxybenzoate octaprenyltransferase</fullName>
        <ecNumber evidence="1">2.5.1.39</ecNumber>
    </recommendedName>
    <alternativeName>
        <fullName evidence="1">4-HB polyprenyltransferase</fullName>
    </alternativeName>
</protein>
<accession>A1TJR2</accession>
<gene>
    <name evidence="1" type="primary">ubiA</name>
    <name type="ordered locus">Aave_0596</name>
</gene>
<proteinExistence type="inferred from homology"/>
<dbReference type="EC" id="2.5.1.39" evidence="1"/>
<dbReference type="EMBL" id="CP000512">
    <property type="protein sequence ID" value="ABM31200.1"/>
    <property type="molecule type" value="Genomic_DNA"/>
</dbReference>
<dbReference type="RefSeq" id="WP_011793771.1">
    <property type="nucleotide sequence ID" value="NC_008752.1"/>
</dbReference>
<dbReference type="SMR" id="A1TJR2"/>
<dbReference type="STRING" id="397945.Aave_0596"/>
<dbReference type="KEGG" id="aav:Aave_0596"/>
<dbReference type="eggNOG" id="COG0382">
    <property type="taxonomic scope" value="Bacteria"/>
</dbReference>
<dbReference type="HOGENOM" id="CLU_034879_1_0_4"/>
<dbReference type="OrthoDB" id="9782418at2"/>
<dbReference type="UniPathway" id="UPA00232"/>
<dbReference type="Proteomes" id="UP000002596">
    <property type="component" value="Chromosome"/>
</dbReference>
<dbReference type="GO" id="GO:0005886">
    <property type="term" value="C:plasma membrane"/>
    <property type="evidence" value="ECO:0007669"/>
    <property type="project" value="UniProtKB-SubCell"/>
</dbReference>
<dbReference type="GO" id="GO:0008412">
    <property type="term" value="F:4-hydroxybenzoate polyprenyltransferase activity"/>
    <property type="evidence" value="ECO:0007669"/>
    <property type="project" value="UniProtKB-UniRule"/>
</dbReference>
<dbReference type="GO" id="GO:0006744">
    <property type="term" value="P:ubiquinone biosynthetic process"/>
    <property type="evidence" value="ECO:0007669"/>
    <property type="project" value="UniProtKB-UniRule"/>
</dbReference>
<dbReference type="CDD" id="cd13959">
    <property type="entry name" value="PT_UbiA_COQ2"/>
    <property type="match status" value="1"/>
</dbReference>
<dbReference type="FunFam" id="1.10.357.140:FF:000008">
    <property type="entry name" value="4-hydroxybenzoate octaprenyltransferase"/>
    <property type="match status" value="1"/>
</dbReference>
<dbReference type="FunFam" id="1.20.120.1780:FF:000001">
    <property type="entry name" value="4-hydroxybenzoate octaprenyltransferase"/>
    <property type="match status" value="1"/>
</dbReference>
<dbReference type="Gene3D" id="1.10.357.140">
    <property type="entry name" value="UbiA prenyltransferase"/>
    <property type="match status" value="1"/>
</dbReference>
<dbReference type="Gene3D" id="1.20.120.1780">
    <property type="entry name" value="UbiA prenyltransferase"/>
    <property type="match status" value="1"/>
</dbReference>
<dbReference type="HAMAP" id="MF_01635">
    <property type="entry name" value="UbiA"/>
    <property type="match status" value="1"/>
</dbReference>
<dbReference type="InterPro" id="IPR006370">
    <property type="entry name" value="HB_polyprenyltransferase-like"/>
</dbReference>
<dbReference type="InterPro" id="IPR039653">
    <property type="entry name" value="Prenyltransferase"/>
</dbReference>
<dbReference type="InterPro" id="IPR000537">
    <property type="entry name" value="UbiA_prenyltransferase"/>
</dbReference>
<dbReference type="InterPro" id="IPR030470">
    <property type="entry name" value="UbiA_prenylTrfase_CS"/>
</dbReference>
<dbReference type="InterPro" id="IPR044878">
    <property type="entry name" value="UbiA_sf"/>
</dbReference>
<dbReference type="NCBIfam" id="TIGR01474">
    <property type="entry name" value="ubiA_proteo"/>
    <property type="match status" value="1"/>
</dbReference>
<dbReference type="PANTHER" id="PTHR11048:SF28">
    <property type="entry name" value="4-HYDROXYBENZOATE POLYPRENYLTRANSFERASE, MITOCHONDRIAL"/>
    <property type="match status" value="1"/>
</dbReference>
<dbReference type="PANTHER" id="PTHR11048">
    <property type="entry name" value="PRENYLTRANSFERASES"/>
    <property type="match status" value="1"/>
</dbReference>
<dbReference type="Pfam" id="PF01040">
    <property type="entry name" value="UbiA"/>
    <property type="match status" value="1"/>
</dbReference>
<dbReference type="PROSITE" id="PS00943">
    <property type="entry name" value="UBIA"/>
    <property type="match status" value="1"/>
</dbReference>
<evidence type="ECO:0000255" key="1">
    <source>
        <dbReference type="HAMAP-Rule" id="MF_01635"/>
    </source>
</evidence>
<name>UBIA_PARC0</name>
<keyword id="KW-0997">Cell inner membrane</keyword>
<keyword id="KW-1003">Cell membrane</keyword>
<keyword id="KW-0460">Magnesium</keyword>
<keyword id="KW-0472">Membrane</keyword>
<keyword id="KW-0808">Transferase</keyword>
<keyword id="KW-0812">Transmembrane</keyword>
<keyword id="KW-1133">Transmembrane helix</keyword>
<keyword id="KW-0831">Ubiquinone biosynthesis</keyword>
<organism>
    <name type="scientific">Paracidovorax citrulli (strain AAC00-1)</name>
    <name type="common">Acidovorax citrulli</name>
    <dbReference type="NCBI Taxonomy" id="397945"/>
    <lineage>
        <taxon>Bacteria</taxon>
        <taxon>Pseudomonadati</taxon>
        <taxon>Pseudomonadota</taxon>
        <taxon>Betaproteobacteria</taxon>
        <taxon>Burkholderiales</taxon>
        <taxon>Comamonadaceae</taxon>
        <taxon>Paracidovorax</taxon>
    </lineage>
</organism>
<comment type="function">
    <text evidence="1">Catalyzes the prenylation of para-hydroxybenzoate (PHB) with an all-trans polyprenyl group. Mediates the second step in the final reaction sequence of ubiquinone-8 (UQ-8) biosynthesis, which is the condensation of the polyisoprenoid side chain with PHB, generating the first membrane-bound Q intermediate 3-octaprenyl-4-hydroxybenzoate.</text>
</comment>
<comment type="catalytic activity">
    <reaction evidence="1">
        <text>all-trans-octaprenyl diphosphate + 4-hydroxybenzoate = 4-hydroxy-3-(all-trans-octaprenyl)benzoate + diphosphate</text>
        <dbReference type="Rhea" id="RHEA:27782"/>
        <dbReference type="ChEBI" id="CHEBI:1617"/>
        <dbReference type="ChEBI" id="CHEBI:17879"/>
        <dbReference type="ChEBI" id="CHEBI:33019"/>
        <dbReference type="ChEBI" id="CHEBI:57711"/>
        <dbReference type="EC" id="2.5.1.39"/>
    </reaction>
</comment>
<comment type="cofactor">
    <cofactor evidence="1">
        <name>Mg(2+)</name>
        <dbReference type="ChEBI" id="CHEBI:18420"/>
    </cofactor>
</comment>
<comment type="pathway">
    <text evidence="1">Cofactor biosynthesis; ubiquinone biosynthesis.</text>
</comment>
<comment type="subcellular location">
    <subcellularLocation>
        <location evidence="1">Cell inner membrane</location>
        <topology evidence="1">Multi-pass membrane protein</topology>
    </subcellularLocation>
</comment>
<comment type="similarity">
    <text evidence="1">Belongs to the UbiA prenyltransferase family.</text>
</comment>